<dbReference type="EC" id="2.3.1.129" evidence="1"/>
<dbReference type="EMBL" id="CP000802">
    <property type="protein sequence ID" value="ABV04581.1"/>
    <property type="molecule type" value="Genomic_DNA"/>
</dbReference>
<dbReference type="RefSeq" id="WP_000565966.1">
    <property type="nucleotide sequence ID" value="NC_009800.1"/>
</dbReference>
<dbReference type="SMR" id="A7ZWC7"/>
<dbReference type="GeneID" id="93777244"/>
<dbReference type="KEGG" id="ecx:EcHS_A0183"/>
<dbReference type="HOGENOM" id="CLU_061249_0_0_6"/>
<dbReference type="UniPathway" id="UPA00359">
    <property type="reaction ID" value="UER00477"/>
</dbReference>
<dbReference type="GO" id="GO:0005737">
    <property type="term" value="C:cytoplasm"/>
    <property type="evidence" value="ECO:0007669"/>
    <property type="project" value="UniProtKB-SubCell"/>
</dbReference>
<dbReference type="GO" id="GO:0016020">
    <property type="term" value="C:membrane"/>
    <property type="evidence" value="ECO:0007669"/>
    <property type="project" value="GOC"/>
</dbReference>
<dbReference type="GO" id="GO:0008780">
    <property type="term" value="F:acyl-[acyl-carrier-protein]-UDP-N-acetylglucosamine O-acyltransferase activity"/>
    <property type="evidence" value="ECO:0007669"/>
    <property type="project" value="UniProtKB-UniRule"/>
</dbReference>
<dbReference type="GO" id="GO:0009245">
    <property type="term" value="P:lipid A biosynthetic process"/>
    <property type="evidence" value="ECO:0007669"/>
    <property type="project" value="UniProtKB-UniRule"/>
</dbReference>
<dbReference type="CDD" id="cd03351">
    <property type="entry name" value="LbH_UDP-GlcNAc_AT"/>
    <property type="match status" value="1"/>
</dbReference>
<dbReference type="FunFam" id="1.20.1180.10:FF:000001">
    <property type="entry name" value="Acyl-[acyl-carrier-protein]--UDP-N-acetylglucosamine O-acyltransferase"/>
    <property type="match status" value="1"/>
</dbReference>
<dbReference type="FunFam" id="2.160.10.10:FF:000003">
    <property type="entry name" value="Acyl-[acyl-carrier-protein]--UDP-N-acetylglucosamine O-acyltransferase"/>
    <property type="match status" value="1"/>
</dbReference>
<dbReference type="Gene3D" id="2.160.10.10">
    <property type="entry name" value="Hexapeptide repeat proteins"/>
    <property type="match status" value="1"/>
</dbReference>
<dbReference type="Gene3D" id="1.20.1180.10">
    <property type="entry name" value="Udp N-acetylglucosamine O-acyltransferase, C-terminal domain"/>
    <property type="match status" value="1"/>
</dbReference>
<dbReference type="HAMAP" id="MF_00387">
    <property type="entry name" value="LpxA"/>
    <property type="match status" value="1"/>
</dbReference>
<dbReference type="InterPro" id="IPR029098">
    <property type="entry name" value="Acetyltransf_C"/>
</dbReference>
<dbReference type="InterPro" id="IPR037157">
    <property type="entry name" value="Acetyltransf_C_sf"/>
</dbReference>
<dbReference type="InterPro" id="IPR001451">
    <property type="entry name" value="Hexapep"/>
</dbReference>
<dbReference type="InterPro" id="IPR018357">
    <property type="entry name" value="Hexapep_transf_CS"/>
</dbReference>
<dbReference type="InterPro" id="IPR010137">
    <property type="entry name" value="Lipid_A_LpxA"/>
</dbReference>
<dbReference type="InterPro" id="IPR011004">
    <property type="entry name" value="Trimer_LpxA-like_sf"/>
</dbReference>
<dbReference type="NCBIfam" id="TIGR01852">
    <property type="entry name" value="lipid_A_lpxA"/>
    <property type="match status" value="1"/>
</dbReference>
<dbReference type="NCBIfam" id="NF003657">
    <property type="entry name" value="PRK05289.1"/>
    <property type="match status" value="1"/>
</dbReference>
<dbReference type="PANTHER" id="PTHR43480">
    <property type="entry name" value="ACYL-[ACYL-CARRIER-PROTEIN]--UDP-N-ACETYLGLUCOSAMINE O-ACYLTRANSFERASE"/>
    <property type="match status" value="1"/>
</dbReference>
<dbReference type="PANTHER" id="PTHR43480:SF1">
    <property type="entry name" value="ACYL-[ACYL-CARRIER-PROTEIN]--UDP-N-ACETYLGLUCOSAMINE O-ACYLTRANSFERASE, MITOCHONDRIAL-RELATED"/>
    <property type="match status" value="1"/>
</dbReference>
<dbReference type="Pfam" id="PF13720">
    <property type="entry name" value="Acetyltransf_11"/>
    <property type="match status" value="1"/>
</dbReference>
<dbReference type="Pfam" id="PF00132">
    <property type="entry name" value="Hexapep"/>
    <property type="match status" value="2"/>
</dbReference>
<dbReference type="PIRSF" id="PIRSF000456">
    <property type="entry name" value="UDP-GlcNAc_acltr"/>
    <property type="match status" value="1"/>
</dbReference>
<dbReference type="SUPFAM" id="SSF51161">
    <property type="entry name" value="Trimeric LpxA-like enzymes"/>
    <property type="match status" value="1"/>
</dbReference>
<dbReference type="PROSITE" id="PS00101">
    <property type="entry name" value="HEXAPEP_TRANSFERASES"/>
    <property type="match status" value="2"/>
</dbReference>
<gene>
    <name evidence="1" type="primary">lpxA</name>
    <name type="ordered locus">EcHS_A0183</name>
</gene>
<evidence type="ECO:0000255" key="1">
    <source>
        <dbReference type="HAMAP-Rule" id="MF_00387"/>
    </source>
</evidence>
<proteinExistence type="inferred from homology"/>
<reference key="1">
    <citation type="journal article" date="2008" name="J. Bacteriol.">
        <title>The pangenome structure of Escherichia coli: comparative genomic analysis of E. coli commensal and pathogenic isolates.</title>
        <authorList>
            <person name="Rasko D.A."/>
            <person name="Rosovitz M.J."/>
            <person name="Myers G.S.A."/>
            <person name="Mongodin E.F."/>
            <person name="Fricke W.F."/>
            <person name="Gajer P."/>
            <person name="Crabtree J."/>
            <person name="Sebaihia M."/>
            <person name="Thomson N.R."/>
            <person name="Chaudhuri R."/>
            <person name="Henderson I.R."/>
            <person name="Sperandio V."/>
            <person name="Ravel J."/>
        </authorList>
    </citation>
    <scope>NUCLEOTIDE SEQUENCE [LARGE SCALE GENOMIC DNA]</scope>
    <source>
        <strain>HS</strain>
    </source>
</reference>
<sequence>MIDKSAFVHPTAIVEEGASIGANAHIGPFCIVGPHVEIGEGTVLKSHVVVNGHTKIGRDNEIYQFASIGEVNQDLKYAGEPTRVEIGDRNRIRESVTIHRGTVQGGGLTKVGSDNLLMINAHIAHDCTVGNRCILANNATLAGHVSVDDFAIIGGMTAVHQFCIIGAHVMVGGCSGVAQDVPPYVIAQGNHATPFGVNIEGLKRRGFSREAITAIRNAYKLIYRSGKTLDEVKPEIAELAETYPEVKAFTDFFARSTRGLIR</sequence>
<keyword id="KW-0012">Acyltransferase</keyword>
<keyword id="KW-0963">Cytoplasm</keyword>
<keyword id="KW-0441">Lipid A biosynthesis</keyword>
<keyword id="KW-0444">Lipid biosynthesis</keyword>
<keyword id="KW-0443">Lipid metabolism</keyword>
<keyword id="KW-0677">Repeat</keyword>
<keyword id="KW-0808">Transferase</keyword>
<comment type="function">
    <text evidence="1">Involved in the biosynthesis of lipid A, a phosphorylated glycolipid that anchors the lipopolysaccharide to the outer membrane of the cell.</text>
</comment>
<comment type="catalytic activity">
    <reaction evidence="1">
        <text>a (3R)-hydroxyacyl-[ACP] + UDP-N-acetyl-alpha-D-glucosamine = a UDP-3-O-[(3R)-3-hydroxyacyl]-N-acetyl-alpha-D-glucosamine + holo-[ACP]</text>
        <dbReference type="Rhea" id="RHEA:67812"/>
        <dbReference type="Rhea" id="RHEA-COMP:9685"/>
        <dbReference type="Rhea" id="RHEA-COMP:9945"/>
        <dbReference type="ChEBI" id="CHEBI:57705"/>
        <dbReference type="ChEBI" id="CHEBI:64479"/>
        <dbReference type="ChEBI" id="CHEBI:78827"/>
        <dbReference type="ChEBI" id="CHEBI:173225"/>
        <dbReference type="EC" id="2.3.1.129"/>
    </reaction>
</comment>
<comment type="pathway">
    <text evidence="1">Glycolipid biosynthesis; lipid IV(A) biosynthesis; lipid IV(A) from (3R)-3-hydroxytetradecanoyl-[acyl-carrier-protein] and UDP-N-acetyl-alpha-D-glucosamine: step 1/6.</text>
</comment>
<comment type="subunit">
    <text evidence="1">Homotrimer.</text>
</comment>
<comment type="subcellular location">
    <subcellularLocation>
        <location evidence="1">Cytoplasm</location>
    </subcellularLocation>
</comment>
<comment type="similarity">
    <text evidence="1">Belongs to the transferase hexapeptide repeat family. LpxA subfamily.</text>
</comment>
<accession>A7ZWC7</accession>
<name>LPXA_ECOHS</name>
<feature type="chain" id="PRO_1000060733" description="Acyl-[acyl-carrier-protein]--UDP-N-acetylglucosamine O-acyltransferase">
    <location>
        <begin position="1"/>
        <end position="262"/>
    </location>
</feature>
<protein>
    <recommendedName>
        <fullName evidence="1">Acyl-[acyl-carrier-protein]--UDP-N-acetylglucosamine O-acyltransferase</fullName>
        <shortName evidence="1">UDP-N-acetylglucosamine acyltransferase</shortName>
        <ecNumber evidence="1">2.3.1.129</ecNumber>
    </recommendedName>
</protein>
<organism>
    <name type="scientific">Escherichia coli O9:H4 (strain HS)</name>
    <dbReference type="NCBI Taxonomy" id="331112"/>
    <lineage>
        <taxon>Bacteria</taxon>
        <taxon>Pseudomonadati</taxon>
        <taxon>Pseudomonadota</taxon>
        <taxon>Gammaproteobacteria</taxon>
        <taxon>Enterobacterales</taxon>
        <taxon>Enterobacteriaceae</taxon>
        <taxon>Escherichia</taxon>
    </lineage>
</organism>